<dbReference type="EC" id="6.3.5.3" evidence="1"/>
<dbReference type="EMBL" id="CP001401">
    <property type="protein sequence ID" value="ACP55499.1"/>
    <property type="molecule type" value="Genomic_DNA"/>
</dbReference>
<dbReference type="RefSeq" id="WP_012718902.1">
    <property type="nucleotide sequence ID" value="NC_012632.1"/>
</dbReference>
<dbReference type="SMR" id="C3N674"/>
<dbReference type="GeneID" id="7814552"/>
<dbReference type="KEGG" id="sim:M1627_1618"/>
<dbReference type="HOGENOM" id="CLU_003100_0_1_2"/>
<dbReference type="UniPathway" id="UPA00074">
    <property type="reaction ID" value="UER00128"/>
</dbReference>
<dbReference type="Proteomes" id="UP000002307">
    <property type="component" value="Chromosome"/>
</dbReference>
<dbReference type="GO" id="GO:0005737">
    <property type="term" value="C:cytoplasm"/>
    <property type="evidence" value="ECO:0007669"/>
    <property type="project" value="UniProtKB-SubCell"/>
</dbReference>
<dbReference type="GO" id="GO:0005524">
    <property type="term" value="F:ATP binding"/>
    <property type="evidence" value="ECO:0007669"/>
    <property type="project" value="UniProtKB-UniRule"/>
</dbReference>
<dbReference type="GO" id="GO:0000287">
    <property type="term" value="F:magnesium ion binding"/>
    <property type="evidence" value="ECO:0007669"/>
    <property type="project" value="UniProtKB-UniRule"/>
</dbReference>
<dbReference type="GO" id="GO:0004642">
    <property type="term" value="F:phosphoribosylformylglycinamidine synthase activity"/>
    <property type="evidence" value="ECO:0007669"/>
    <property type="project" value="UniProtKB-UniRule"/>
</dbReference>
<dbReference type="GO" id="GO:0006189">
    <property type="term" value="P:'de novo' IMP biosynthetic process"/>
    <property type="evidence" value="ECO:0007669"/>
    <property type="project" value="UniProtKB-UniRule"/>
</dbReference>
<dbReference type="CDD" id="cd02203">
    <property type="entry name" value="PurL_repeat1"/>
    <property type="match status" value="1"/>
</dbReference>
<dbReference type="CDD" id="cd02204">
    <property type="entry name" value="PurL_repeat2"/>
    <property type="match status" value="1"/>
</dbReference>
<dbReference type="Gene3D" id="3.90.650.10">
    <property type="entry name" value="PurM-like C-terminal domain"/>
    <property type="match status" value="2"/>
</dbReference>
<dbReference type="Gene3D" id="3.30.1330.10">
    <property type="entry name" value="PurM-like, N-terminal domain"/>
    <property type="match status" value="2"/>
</dbReference>
<dbReference type="HAMAP" id="MF_00420">
    <property type="entry name" value="PurL_2"/>
    <property type="match status" value="1"/>
</dbReference>
<dbReference type="InterPro" id="IPR010074">
    <property type="entry name" value="PRibForGlyAmidine_synth_PurL"/>
</dbReference>
<dbReference type="InterPro" id="IPR041609">
    <property type="entry name" value="PurL_linker"/>
</dbReference>
<dbReference type="InterPro" id="IPR010918">
    <property type="entry name" value="PurM-like_C_dom"/>
</dbReference>
<dbReference type="InterPro" id="IPR036676">
    <property type="entry name" value="PurM-like_C_sf"/>
</dbReference>
<dbReference type="InterPro" id="IPR016188">
    <property type="entry name" value="PurM-like_N"/>
</dbReference>
<dbReference type="InterPro" id="IPR036921">
    <property type="entry name" value="PurM-like_N_sf"/>
</dbReference>
<dbReference type="NCBIfam" id="TIGR01736">
    <property type="entry name" value="FGAM_synth_II"/>
    <property type="match status" value="1"/>
</dbReference>
<dbReference type="NCBIfam" id="NF002290">
    <property type="entry name" value="PRK01213.1"/>
    <property type="match status" value="1"/>
</dbReference>
<dbReference type="PANTHER" id="PTHR43555">
    <property type="entry name" value="PHOSPHORIBOSYLFORMYLGLYCINAMIDINE SYNTHASE SUBUNIT PURL"/>
    <property type="match status" value="1"/>
</dbReference>
<dbReference type="PANTHER" id="PTHR43555:SF1">
    <property type="entry name" value="PHOSPHORIBOSYLFORMYLGLYCINAMIDINE SYNTHASE SUBUNIT PURL"/>
    <property type="match status" value="1"/>
</dbReference>
<dbReference type="Pfam" id="PF00586">
    <property type="entry name" value="AIRS"/>
    <property type="match status" value="2"/>
</dbReference>
<dbReference type="Pfam" id="PF02769">
    <property type="entry name" value="AIRS_C"/>
    <property type="match status" value="2"/>
</dbReference>
<dbReference type="Pfam" id="PF18072">
    <property type="entry name" value="FGAR-AT_linker"/>
    <property type="match status" value="1"/>
</dbReference>
<dbReference type="PIRSF" id="PIRSF001587">
    <property type="entry name" value="FGAM_synthase_II"/>
    <property type="match status" value="1"/>
</dbReference>
<dbReference type="SUPFAM" id="SSF56042">
    <property type="entry name" value="PurM C-terminal domain-like"/>
    <property type="match status" value="2"/>
</dbReference>
<dbReference type="SUPFAM" id="SSF55326">
    <property type="entry name" value="PurM N-terminal domain-like"/>
    <property type="match status" value="2"/>
</dbReference>
<name>PURL_SACI3</name>
<comment type="function">
    <text evidence="1">Part of the phosphoribosylformylglycinamidine synthase complex involved in the purines biosynthetic pathway. Catalyzes the ATP-dependent conversion of formylglycinamide ribonucleotide (FGAR) and glutamine to yield formylglycinamidine ribonucleotide (FGAM) and glutamate. The FGAM synthase complex is composed of three subunits. PurQ produces an ammonia molecule by converting glutamine to glutamate. PurL transfers the ammonia molecule to FGAR to form FGAM in an ATP-dependent manner. PurS interacts with PurQ and PurL and is thought to assist in the transfer of the ammonia molecule from PurQ to PurL.</text>
</comment>
<comment type="catalytic activity">
    <reaction evidence="1">
        <text>N(2)-formyl-N(1)-(5-phospho-beta-D-ribosyl)glycinamide + L-glutamine + ATP + H2O = 2-formamido-N(1)-(5-O-phospho-beta-D-ribosyl)acetamidine + L-glutamate + ADP + phosphate + H(+)</text>
        <dbReference type="Rhea" id="RHEA:17129"/>
        <dbReference type="ChEBI" id="CHEBI:15377"/>
        <dbReference type="ChEBI" id="CHEBI:15378"/>
        <dbReference type="ChEBI" id="CHEBI:29985"/>
        <dbReference type="ChEBI" id="CHEBI:30616"/>
        <dbReference type="ChEBI" id="CHEBI:43474"/>
        <dbReference type="ChEBI" id="CHEBI:58359"/>
        <dbReference type="ChEBI" id="CHEBI:147286"/>
        <dbReference type="ChEBI" id="CHEBI:147287"/>
        <dbReference type="ChEBI" id="CHEBI:456216"/>
        <dbReference type="EC" id="6.3.5.3"/>
    </reaction>
</comment>
<comment type="pathway">
    <text evidence="1">Purine metabolism; IMP biosynthesis via de novo pathway; 5-amino-1-(5-phospho-D-ribosyl)imidazole from N(2)-formyl-N(1)-(5-phospho-D-ribosyl)glycinamide: step 1/2.</text>
</comment>
<comment type="subunit">
    <text evidence="1">Monomer. Part of the FGAM synthase complex composed of 1 PurL, 1 PurQ and 2 PurS subunits.</text>
</comment>
<comment type="subcellular location">
    <subcellularLocation>
        <location evidence="1">Cytoplasm</location>
    </subcellularLocation>
</comment>
<comment type="similarity">
    <text evidence="1">Belongs to the FGAMS family.</text>
</comment>
<organism>
    <name type="scientific">Saccharolobus islandicus (strain M.16.27)</name>
    <name type="common">Sulfolobus islandicus</name>
    <dbReference type="NCBI Taxonomy" id="427318"/>
    <lineage>
        <taxon>Archaea</taxon>
        <taxon>Thermoproteota</taxon>
        <taxon>Thermoprotei</taxon>
        <taxon>Sulfolobales</taxon>
        <taxon>Sulfolobaceae</taxon>
        <taxon>Saccharolobus</taxon>
    </lineage>
</organism>
<proteinExistence type="inferred from homology"/>
<keyword id="KW-0067">ATP-binding</keyword>
<keyword id="KW-0963">Cytoplasm</keyword>
<keyword id="KW-0436">Ligase</keyword>
<keyword id="KW-0460">Magnesium</keyword>
<keyword id="KW-0479">Metal-binding</keyword>
<keyword id="KW-0547">Nucleotide-binding</keyword>
<keyword id="KW-0658">Purine biosynthesis</keyword>
<gene>
    <name evidence="1" type="primary">purL</name>
    <name type="ordered locus">M1627_1618</name>
</gene>
<sequence length="709" mass="77216">MGLNLLPIEMDDIRKRLDREPNEIEWRVIDAVWSEHCSYKSSKIFLKSFSIDSPNVIMGIKDWQDAGAVDIGDGWAIVIKVESHNHPSAIDPFNGAATGVGGIIRDIISKGAKPIALMDMIRVGNLKIRKNVWLLKNIIAGIAAYGNSIGVPVVGGELSFDDTYNDNPLVDVAAIGIVRKDKIKPSIVDKAGLKLVLAGLTGIDGLGGASFASRKLSGEDEIGAVQIADPFAGKIILDITLEIADKVEAIKDLGGGGLAVAVTEMANGLGAIVDIEKIPLRVKNMNPADVIISETQERMLYAVEEKNVEEVCKAFEEYEYPCSVIGEITSEPIIKFRYFGKDLVSLPTNALLEPPKFLWPIKNVRKNVEEKNVDLPLESTIYTVLSHPDLVSKEWVYSQFDYEVNTSTVVKPGDANGAVVSLPNGKLLAIKVDGNPDLCSEDAYECGKGIVAEAYRNLATVGARGMVAVDHLQFGDPKKPEVYYTFVEAIRGIGEATRFFNIPIVGGKVSFYNENSQGKPIKPTPLIVMAGLVQGKLLKNRVEDSSYVVLLGYTRKELGGSLLSKIFKVPSQAPKVRLQEDLLSSEVVIDAINEEKITFAKDISRGGLAASLFNIIVHGYGVEISTKSILSDTDNVVENLFSESSGRFVILTNEPEWIVEKSRSKGIVASIIGKVNKKTSILTIDNTDYDLKTIVNNYFNFLEEVIGNG</sequence>
<protein>
    <recommendedName>
        <fullName evidence="1">Phosphoribosylformylglycinamidine synthase subunit PurL</fullName>
        <shortName evidence="1">FGAM synthase</shortName>
        <ecNumber evidence="1">6.3.5.3</ecNumber>
    </recommendedName>
    <alternativeName>
        <fullName evidence="1">Formylglycinamide ribonucleotide amidotransferase subunit II</fullName>
        <shortName evidence="1">FGAR amidotransferase II</shortName>
        <shortName evidence="1">FGAR-AT II</shortName>
    </alternativeName>
    <alternativeName>
        <fullName evidence="1">Glutamine amidotransferase PurL</fullName>
    </alternativeName>
    <alternativeName>
        <fullName evidence="1">Phosphoribosylformylglycinamidine synthase subunit II</fullName>
    </alternativeName>
</protein>
<accession>C3N674</accession>
<evidence type="ECO:0000255" key="1">
    <source>
        <dbReference type="HAMAP-Rule" id="MF_00420"/>
    </source>
</evidence>
<reference key="1">
    <citation type="journal article" date="2009" name="Proc. Natl. Acad. Sci. U.S.A.">
        <title>Biogeography of the Sulfolobus islandicus pan-genome.</title>
        <authorList>
            <person name="Reno M.L."/>
            <person name="Held N.L."/>
            <person name="Fields C.J."/>
            <person name="Burke P.V."/>
            <person name="Whitaker R.J."/>
        </authorList>
    </citation>
    <scope>NUCLEOTIDE SEQUENCE [LARGE SCALE GENOMIC DNA]</scope>
    <source>
        <strain>M.16.27</strain>
    </source>
</reference>
<feature type="chain" id="PRO_1000206044" description="Phosphoribosylformylglycinamidine synthase subunit PurL">
    <location>
        <begin position="1"/>
        <end position="709"/>
    </location>
</feature>
<feature type="active site" evidence="1">
    <location>
        <position position="36"/>
    </location>
</feature>
<feature type="active site" description="Proton acceptor" evidence="1">
    <location>
        <position position="84"/>
    </location>
</feature>
<feature type="binding site" evidence="1">
    <location>
        <position position="39"/>
    </location>
    <ligand>
        <name>ATP</name>
        <dbReference type="ChEBI" id="CHEBI:30616"/>
    </ligand>
</feature>
<feature type="binding site" evidence="1">
    <location>
        <position position="80"/>
    </location>
    <ligand>
        <name>ATP</name>
        <dbReference type="ChEBI" id="CHEBI:30616"/>
    </ligand>
</feature>
<feature type="binding site" evidence="1">
    <location>
        <position position="82"/>
    </location>
    <ligand>
        <name>Mg(2+)</name>
        <dbReference type="ChEBI" id="CHEBI:18420"/>
        <label>1</label>
    </ligand>
</feature>
<feature type="binding site" evidence="1">
    <location>
        <begin position="83"/>
        <end position="86"/>
    </location>
    <ligand>
        <name>substrate</name>
    </ligand>
</feature>
<feature type="binding site" evidence="1">
    <location>
        <position position="105"/>
    </location>
    <ligand>
        <name>substrate</name>
    </ligand>
</feature>
<feature type="binding site" evidence="1">
    <location>
        <position position="106"/>
    </location>
    <ligand>
        <name>Mg(2+)</name>
        <dbReference type="ChEBI" id="CHEBI:18420"/>
        <label>2</label>
    </ligand>
</feature>
<feature type="binding site" evidence="1">
    <location>
        <position position="226"/>
    </location>
    <ligand>
        <name>substrate</name>
    </ligand>
</feature>
<feature type="binding site" evidence="1">
    <location>
        <position position="252"/>
    </location>
    <ligand>
        <name>Mg(2+)</name>
        <dbReference type="ChEBI" id="CHEBI:18420"/>
        <label>2</label>
    </ligand>
</feature>
<feature type="binding site" evidence="1">
    <location>
        <begin position="294"/>
        <end position="296"/>
    </location>
    <ligand>
        <name>substrate</name>
    </ligand>
</feature>
<feature type="binding site" evidence="1">
    <location>
        <position position="470"/>
    </location>
    <ligand>
        <name>ATP</name>
        <dbReference type="ChEBI" id="CHEBI:30616"/>
    </ligand>
</feature>
<feature type="binding site" evidence="1">
    <location>
        <position position="507"/>
    </location>
    <ligand>
        <name>ATP</name>
        <dbReference type="ChEBI" id="CHEBI:30616"/>
    </ligand>
</feature>
<feature type="binding site" evidence="1">
    <location>
        <position position="510"/>
    </location>
    <ligand>
        <name>substrate</name>
    </ligand>
</feature>